<name>IF3_ACIAD</name>
<keyword id="KW-0963">Cytoplasm</keyword>
<keyword id="KW-0396">Initiation factor</keyword>
<keyword id="KW-0648">Protein biosynthesis</keyword>
<sequence>MKQPDRNQQQGAKSNRPAINDEIRSKEVRLVGADGEQKGIVSLNEALRAAEEVELDLVEIVANAEPPVCKIMDYNKHLFDLKQKQKDAKKKQHQVQVKEIKLRPATDVGDYQVKLRAILKFLEEGNKVKITLRFRGREMAHQQLGLAQLQKIEADVTEYGVVEQAPKMEGRQMGMLLGPKKKK</sequence>
<evidence type="ECO:0000255" key="1">
    <source>
        <dbReference type="HAMAP-Rule" id="MF_00080"/>
    </source>
</evidence>
<evidence type="ECO:0000256" key="2">
    <source>
        <dbReference type="SAM" id="MobiDB-lite"/>
    </source>
</evidence>
<protein>
    <recommendedName>
        <fullName evidence="1">Translation initiation factor IF-3</fullName>
    </recommendedName>
</protein>
<feature type="chain" id="PRO_0000177470" description="Translation initiation factor IF-3">
    <location>
        <begin position="1"/>
        <end position="183"/>
    </location>
</feature>
<feature type="region of interest" description="Disordered" evidence="2">
    <location>
        <begin position="1"/>
        <end position="24"/>
    </location>
</feature>
<feature type="compositionally biased region" description="Polar residues" evidence="2">
    <location>
        <begin position="1"/>
        <end position="13"/>
    </location>
</feature>
<proteinExistence type="inferred from homology"/>
<accession>Q6F861</accession>
<gene>
    <name evidence="1" type="primary">infC</name>
    <name type="ordered locus">ACIAD3054</name>
</gene>
<comment type="function">
    <text evidence="1">IF-3 binds to the 30S ribosomal subunit and shifts the equilibrium between 70S ribosomes and their 50S and 30S subunits in favor of the free subunits, thus enhancing the availability of 30S subunits on which protein synthesis initiation begins.</text>
</comment>
<comment type="subunit">
    <text evidence="1">Monomer.</text>
</comment>
<comment type="subcellular location">
    <subcellularLocation>
        <location evidence="1">Cytoplasm</location>
    </subcellularLocation>
</comment>
<comment type="similarity">
    <text evidence="1">Belongs to the IF-3 family.</text>
</comment>
<organism>
    <name type="scientific">Acinetobacter baylyi (strain ATCC 33305 / BD413 / ADP1)</name>
    <dbReference type="NCBI Taxonomy" id="62977"/>
    <lineage>
        <taxon>Bacteria</taxon>
        <taxon>Pseudomonadati</taxon>
        <taxon>Pseudomonadota</taxon>
        <taxon>Gammaproteobacteria</taxon>
        <taxon>Moraxellales</taxon>
        <taxon>Moraxellaceae</taxon>
        <taxon>Acinetobacter</taxon>
    </lineage>
</organism>
<reference key="1">
    <citation type="journal article" date="2004" name="Nucleic Acids Res.">
        <title>Unique features revealed by the genome sequence of Acinetobacter sp. ADP1, a versatile and naturally transformation competent bacterium.</title>
        <authorList>
            <person name="Barbe V."/>
            <person name="Vallenet D."/>
            <person name="Fonknechten N."/>
            <person name="Kreimeyer A."/>
            <person name="Oztas S."/>
            <person name="Labarre L."/>
            <person name="Cruveiller S."/>
            <person name="Robert C."/>
            <person name="Duprat S."/>
            <person name="Wincker P."/>
            <person name="Ornston L.N."/>
            <person name="Weissenbach J."/>
            <person name="Marliere P."/>
            <person name="Cohen G.N."/>
            <person name="Medigue C."/>
        </authorList>
    </citation>
    <scope>NUCLEOTIDE SEQUENCE [LARGE SCALE GENOMIC DNA]</scope>
    <source>
        <strain>ATCC 33305 / BD413 / ADP1</strain>
    </source>
</reference>
<dbReference type="EMBL" id="CR543861">
    <property type="protein sequence ID" value="CAG69754.1"/>
    <property type="molecule type" value="Genomic_DNA"/>
</dbReference>
<dbReference type="SMR" id="Q6F861"/>
<dbReference type="STRING" id="202950.GCA_001485005_02714"/>
<dbReference type="KEGG" id="aci:ACIAD3054"/>
<dbReference type="eggNOG" id="COG0290">
    <property type="taxonomic scope" value="Bacteria"/>
</dbReference>
<dbReference type="HOGENOM" id="CLU_054919_3_2_6"/>
<dbReference type="OrthoDB" id="9806014at2"/>
<dbReference type="Proteomes" id="UP000000430">
    <property type="component" value="Chromosome"/>
</dbReference>
<dbReference type="GO" id="GO:0005829">
    <property type="term" value="C:cytosol"/>
    <property type="evidence" value="ECO:0007669"/>
    <property type="project" value="TreeGrafter"/>
</dbReference>
<dbReference type="GO" id="GO:0016020">
    <property type="term" value="C:membrane"/>
    <property type="evidence" value="ECO:0007669"/>
    <property type="project" value="TreeGrafter"/>
</dbReference>
<dbReference type="GO" id="GO:0043022">
    <property type="term" value="F:ribosome binding"/>
    <property type="evidence" value="ECO:0007669"/>
    <property type="project" value="TreeGrafter"/>
</dbReference>
<dbReference type="GO" id="GO:0003743">
    <property type="term" value="F:translation initiation factor activity"/>
    <property type="evidence" value="ECO:0007669"/>
    <property type="project" value="UniProtKB-UniRule"/>
</dbReference>
<dbReference type="GO" id="GO:0032790">
    <property type="term" value="P:ribosome disassembly"/>
    <property type="evidence" value="ECO:0007669"/>
    <property type="project" value="TreeGrafter"/>
</dbReference>
<dbReference type="FunFam" id="3.10.20.80:FF:000001">
    <property type="entry name" value="Translation initiation factor IF-3"/>
    <property type="match status" value="1"/>
</dbReference>
<dbReference type="FunFam" id="3.30.110.10:FF:000001">
    <property type="entry name" value="Translation initiation factor IF-3"/>
    <property type="match status" value="1"/>
</dbReference>
<dbReference type="Gene3D" id="3.30.110.10">
    <property type="entry name" value="Translation initiation factor 3 (IF-3), C-terminal domain"/>
    <property type="match status" value="1"/>
</dbReference>
<dbReference type="Gene3D" id="3.10.20.80">
    <property type="entry name" value="Translation initiation factor 3 (IF-3), N-terminal domain"/>
    <property type="match status" value="1"/>
</dbReference>
<dbReference type="HAMAP" id="MF_00080">
    <property type="entry name" value="IF_3"/>
    <property type="match status" value="1"/>
</dbReference>
<dbReference type="InterPro" id="IPR036788">
    <property type="entry name" value="T_IF-3_C_sf"/>
</dbReference>
<dbReference type="InterPro" id="IPR036787">
    <property type="entry name" value="T_IF-3_N_sf"/>
</dbReference>
<dbReference type="InterPro" id="IPR001288">
    <property type="entry name" value="Translation_initiation_fac_3"/>
</dbReference>
<dbReference type="InterPro" id="IPR019815">
    <property type="entry name" value="Translation_initiation_fac_3_C"/>
</dbReference>
<dbReference type="InterPro" id="IPR019814">
    <property type="entry name" value="Translation_initiation_fac_3_N"/>
</dbReference>
<dbReference type="NCBIfam" id="TIGR00168">
    <property type="entry name" value="infC"/>
    <property type="match status" value="1"/>
</dbReference>
<dbReference type="PANTHER" id="PTHR10938">
    <property type="entry name" value="TRANSLATION INITIATION FACTOR IF-3"/>
    <property type="match status" value="1"/>
</dbReference>
<dbReference type="PANTHER" id="PTHR10938:SF0">
    <property type="entry name" value="TRANSLATION INITIATION FACTOR IF-3, MITOCHONDRIAL"/>
    <property type="match status" value="1"/>
</dbReference>
<dbReference type="Pfam" id="PF00707">
    <property type="entry name" value="IF3_C"/>
    <property type="match status" value="1"/>
</dbReference>
<dbReference type="Pfam" id="PF05198">
    <property type="entry name" value="IF3_N"/>
    <property type="match status" value="1"/>
</dbReference>
<dbReference type="SUPFAM" id="SSF55200">
    <property type="entry name" value="Translation initiation factor IF3, C-terminal domain"/>
    <property type="match status" value="1"/>
</dbReference>
<dbReference type="SUPFAM" id="SSF54364">
    <property type="entry name" value="Translation initiation factor IF3, N-terminal domain"/>
    <property type="match status" value="1"/>
</dbReference>